<name>Y2466_CLOBM</name>
<reference key="1">
    <citation type="journal article" date="2007" name="PLoS ONE">
        <title>Analysis of the neurotoxin complex genes in Clostridium botulinum A1-A4 and B1 strains: BoNT/A3, /Ba4 and /B1 clusters are located within plasmids.</title>
        <authorList>
            <person name="Smith T.J."/>
            <person name="Hill K.K."/>
            <person name="Foley B.T."/>
            <person name="Detter J.C."/>
            <person name="Munk A.C."/>
            <person name="Bruce D.C."/>
            <person name="Doggett N.A."/>
            <person name="Smith L.A."/>
            <person name="Marks J.D."/>
            <person name="Xie G."/>
            <person name="Brettin T.S."/>
        </authorList>
    </citation>
    <scope>NUCLEOTIDE SEQUENCE [LARGE SCALE GENOMIC DNA]</scope>
    <source>
        <strain>Loch Maree / Type A3</strain>
    </source>
</reference>
<evidence type="ECO:0000255" key="1">
    <source>
        <dbReference type="HAMAP-Rule" id="MF_00693"/>
    </source>
</evidence>
<gene>
    <name type="ordered locus">CLK_2466</name>
</gene>
<proteinExistence type="inferred from homology"/>
<dbReference type="EMBL" id="CP000962">
    <property type="protein sequence ID" value="ACA56656.1"/>
    <property type="molecule type" value="Genomic_DNA"/>
</dbReference>
<dbReference type="RefSeq" id="WP_012344499.1">
    <property type="nucleotide sequence ID" value="NC_010520.1"/>
</dbReference>
<dbReference type="SMR" id="B1L0B5"/>
<dbReference type="KEGG" id="cbl:CLK_2466"/>
<dbReference type="HOGENOM" id="CLU_062974_2_2_9"/>
<dbReference type="GO" id="GO:0005829">
    <property type="term" value="C:cytosol"/>
    <property type="evidence" value="ECO:0007669"/>
    <property type="project" value="TreeGrafter"/>
</dbReference>
<dbReference type="GO" id="GO:0003677">
    <property type="term" value="F:DNA binding"/>
    <property type="evidence" value="ECO:0007669"/>
    <property type="project" value="UniProtKB-UniRule"/>
</dbReference>
<dbReference type="GO" id="GO:0006355">
    <property type="term" value="P:regulation of DNA-templated transcription"/>
    <property type="evidence" value="ECO:0007669"/>
    <property type="project" value="UniProtKB-UniRule"/>
</dbReference>
<dbReference type="FunFam" id="1.10.10.200:FF:000002">
    <property type="entry name" value="Probable transcriptional regulatory protein CLM62_37755"/>
    <property type="match status" value="1"/>
</dbReference>
<dbReference type="FunFam" id="3.30.70.980:FF:000002">
    <property type="entry name" value="Probable transcriptional regulatory protein YebC"/>
    <property type="match status" value="1"/>
</dbReference>
<dbReference type="Gene3D" id="1.10.10.200">
    <property type="match status" value="1"/>
</dbReference>
<dbReference type="Gene3D" id="3.30.70.980">
    <property type="match status" value="2"/>
</dbReference>
<dbReference type="HAMAP" id="MF_00693">
    <property type="entry name" value="Transcrip_reg_TACO1"/>
    <property type="match status" value="1"/>
</dbReference>
<dbReference type="InterPro" id="IPR017856">
    <property type="entry name" value="Integrase-like_N"/>
</dbReference>
<dbReference type="InterPro" id="IPR048300">
    <property type="entry name" value="TACO1_YebC-like_2nd/3rd_dom"/>
</dbReference>
<dbReference type="InterPro" id="IPR049083">
    <property type="entry name" value="TACO1_YebC_N"/>
</dbReference>
<dbReference type="InterPro" id="IPR002876">
    <property type="entry name" value="Transcrip_reg_TACO1-like"/>
</dbReference>
<dbReference type="InterPro" id="IPR026564">
    <property type="entry name" value="Transcrip_reg_TACO1-like_dom3"/>
</dbReference>
<dbReference type="InterPro" id="IPR029072">
    <property type="entry name" value="YebC-like"/>
</dbReference>
<dbReference type="NCBIfam" id="NF001030">
    <property type="entry name" value="PRK00110.1"/>
    <property type="match status" value="1"/>
</dbReference>
<dbReference type="NCBIfam" id="NF009044">
    <property type="entry name" value="PRK12378.1"/>
    <property type="match status" value="1"/>
</dbReference>
<dbReference type="NCBIfam" id="TIGR01033">
    <property type="entry name" value="YebC/PmpR family DNA-binding transcriptional regulator"/>
    <property type="match status" value="1"/>
</dbReference>
<dbReference type="PANTHER" id="PTHR12532:SF6">
    <property type="entry name" value="TRANSCRIPTIONAL REGULATORY PROTEIN YEBC-RELATED"/>
    <property type="match status" value="1"/>
</dbReference>
<dbReference type="PANTHER" id="PTHR12532">
    <property type="entry name" value="TRANSLATIONAL ACTIVATOR OF CYTOCHROME C OXIDASE 1"/>
    <property type="match status" value="1"/>
</dbReference>
<dbReference type="Pfam" id="PF20772">
    <property type="entry name" value="TACO1_YebC_N"/>
    <property type="match status" value="1"/>
</dbReference>
<dbReference type="Pfam" id="PF01709">
    <property type="entry name" value="Transcrip_reg"/>
    <property type="match status" value="1"/>
</dbReference>
<dbReference type="SUPFAM" id="SSF75625">
    <property type="entry name" value="YebC-like"/>
    <property type="match status" value="1"/>
</dbReference>
<sequence>MSGHSKWHNIQAKKGKVDAKRGKIFTKIGKEIVVAVKQGGPSADSNPRLRDVIAKAKANNMPNDTIERSIKKASGELNAVDYETITYEGYGPAGIAVLVDVLTDNKNRSAGNVRYAFTKQGGNMGSTGCVSFMFQSKGQIVIEKKDGLDEDELMMMALDAGAEDFESEDEVYVVATSQEDFGTVREALEAEGLEFLEAEIKMVPDTYTAIDEDTATKFQKMLDVLEDDDDVQNVYHNAEFPEGWEE</sequence>
<comment type="subcellular location">
    <subcellularLocation>
        <location evidence="1">Cytoplasm</location>
    </subcellularLocation>
</comment>
<comment type="similarity">
    <text evidence="1">Belongs to the TACO1 family.</text>
</comment>
<organism>
    <name type="scientific">Clostridium botulinum (strain Loch Maree / Type A3)</name>
    <dbReference type="NCBI Taxonomy" id="498214"/>
    <lineage>
        <taxon>Bacteria</taxon>
        <taxon>Bacillati</taxon>
        <taxon>Bacillota</taxon>
        <taxon>Clostridia</taxon>
        <taxon>Eubacteriales</taxon>
        <taxon>Clostridiaceae</taxon>
        <taxon>Clostridium</taxon>
    </lineage>
</organism>
<accession>B1L0B5</accession>
<protein>
    <recommendedName>
        <fullName evidence="1">Probable transcriptional regulatory protein CLK_2466</fullName>
    </recommendedName>
</protein>
<feature type="chain" id="PRO_1000132177" description="Probable transcriptional regulatory protein CLK_2466">
    <location>
        <begin position="1"/>
        <end position="246"/>
    </location>
</feature>
<keyword id="KW-0963">Cytoplasm</keyword>
<keyword id="KW-0238">DNA-binding</keyword>
<keyword id="KW-0804">Transcription</keyword>
<keyword id="KW-0805">Transcription regulation</keyword>